<comment type="function">
    <text evidence="2">One of the essential components for the initiation of protein synthesis. Protects formylmethionyl-tRNA from spontaneous hydrolysis and promotes its binding to the 30S ribosomal subunits. Also involved in the hydrolysis of GTP during the formation of the 70S ribosomal complex.</text>
</comment>
<comment type="subcellular location">
    <subcellularLocation>
        <location evidence="2">Cytoplasm</location>
    </subcellularLocation>
</comment>
<comment type="similarity">
    <text evidence="2">Belongs to the TRAFAC class translation factor GTPase superfamily. Classic translation factor GTPase family. IF-2 subfamily.</text>
</comment>
<protein>
    <recommendedName>
        <fullName evidence="2">Translation initiation factor IF-2</fullName>
    </recommendedName>
</protein>
<accession>Q8K9H1</accession>
<proteinExistence type="inferred from homology"/>
<reference key="1">
    <citation type="journal article" date="2002" name="Science">
        <title>50 million years of genomic stasis in endosymbiotic bacteria.</title>
        <authorList>
            <person name="Tamas I."/>
            <person name="Klasson L."/>
            <person name="Canbaeck B."/>
            <person name="Naeslund A.K."/>
            <person name="Eriksson A.-S."/>
            <person name="Wernegreen J.J."/>
            <person name="Sandstroem J.P."/>
            <person name="Moran N.A."/>
            <person name="Andersson S.G.E."/>
        </authorList>
    </citation>
    <scope>NUCLEOTIDE SEQUENCE [LARGE SCALE GENOMIC DNA]</scope>
    <source>
        <strain>Sg</strain>
    </source>
</reference>
<organism>
    <name type="scientific">Buchnera aphidicola subsp. Schizaphis graminum (strain Sg)</name>
    <dbReference type="NCBI Taxonomy" id="198804"/>
    <lineage>
        <taxon>Bacteria</taxon>
        <taxon>Pseudomonadati</taxon>
        <taxon>Pseudomonadota</taxon>
        <taxon>Gammaproteobacteria</taxon>
        <taxon>Enterobacterales</taxon>
        <taxon>Erwiniaceae</taxon>
        <taxon>Buchnera</taxon>
    </lineage>
</organism>
<gene>
    <name evidence="2" type="primary">infB</name>
    <name type="ordered locus">BUsg_365</name>
</gene>
<sequence>MVDISLKILSNEMKISIKELIKTLSEISISKTENDCISITEKKNLLKYLESKKKPFLNTFILQRKTRSTLNVFTPGGKNKSVQIEIRKKRMYLKNNKSELEPLLKNKNLLQNKEKNNLKSLKNTISKAKESQKNIDILEESKANINFKNLNKLTKSNVFNKNEKNKSLKKNINFNNHSFYSKKTIKNNTENQKLYKEEKKDYHLTTFIHNRNTEDNRDREIEKNKRNFHRNIKNYRQKKNNKQNNQIKSKKDEVRISKNRKNVKQKNKSILLQQVFKKPESVINRDVVINGAITVCDLANKMAIKSSEVIKNMMNMGIIGTINHVLDQDTAQLIAEEMGHKVILRRENELEELIMKDRDTGNNISLTRAPVVTIMGHVDHGKTSLLDYIRSTKVASSEAGGITQNIGAYHVTTDFGSVTFLDTPGHSAFTGMRSRGVKITDIVVLVVAADDGVKPQTIEAIQHAKEANVPIIVAINKIDKVDSNIDQIKNDLTKYNILSEEWGGENIFVLISAKTGKGIDNLLNAILLQSEILELKAISTGMAEGVVIESFLDKGRGPIATVLVQKGNLKKGDIILCGFEYGRIKVLRNENGKTLKHAGPSMPVEVLGLSKVPFSGEKVTVVRDEKKAKEVASYRKNKSREIKLANQNRSSLENMFKNIKKNDFSELKIIIKSDVQGSLEAISSALFKLSTNEVKVNIIGSGIGGITETDASLALASNAIILGFNVRADASAKKIIDLENLDLRYYSVIYDLLNEVKAAMTGLLSPQYKQNIIGLAEVRNIFKSPKFGLIAGCMVTEGIIKRNNPIRILRNNVVVYEGELESLRRFKEDINEIRNGMECGIGIKNYHDLNIGDVIEVFEVKEIKRIL</sequence>
<evidence type="ECO:0000250" key="1"/>
<evidence type="ECO:0000255" key="2">
    <source>
        <dbReference type="HAMAP-Rule" id="MF_00100"/>
    </source>
</evidence>
<name>IF2_BUCAP</name>
<dbReference type="EMBL" id="AE013218">
    <property type="protein sequence ID" value="AAM67918.1"/>
    <property type="molecule type" value="Genomic_DNA"/>
</dbReference>
<dbReference type="RefSeq" id="WP_011053885.1">
    <property type="nucleotide sequence ID" value="NC_004061.1"/>
</dbReference>
<dbReference type="SMR" id="Q8K9H1"/>
<dbReference type="STRING" id="198804.BUsg_365"/>
<dbReference type="GeneID" id="93003835"/>
<dbReference type="KEGG" id="bas:BUsg_365"/>
<dbReference type="eggNOG" id="COG0532">
    <property type="taxonomic scope" value="Bacteria"/>
</dbReference>
<dbReference type="HOGENOM" id="CLU_006301_6_3_6"/>
<dbReference type="Proteomes" id="UP000000416">
    <property type="component" value="Chromosome"/>
</dbReference>
<dbReference type="GO" id="GO:0005829">
    <property type="term" value="C:cytosol"/>
    <property type="evidence" value="ECO:0007669"/>
    <property type="project" value="TreeGrafter"/>
</dbReference>
<dbReference type="GO" id="GO:0005525">
    <property type="term" value="F:GTP binding"/>
    <property type="evidence" value="ECO:0007669"/>
    <property type="project" value="UniProtKB-KW"/>
</dbReference>
<dbReference type="GO" id="GO:0003924">
    <property type="term" value="F:GTPase activity"/>
    <property type="evidence" value="ECO:0007669"/>
    <property type="project" value="UniProtKB-UniRule"/>
</dbReference>
<dbReference type="GO" id="GO:0097216">
    <property type="term" value="F:guanosine tetraphosphate binding"/>
    <property type="evidence" value="ECO:0007669"/>
    <property type="project" value="UniProtKB-ARBA"/>
</dbReference>
<dbReference type="GO" id="GO:0003743">
    <property type="term" value="F:translation initiation factor activity"/>
    <property type="evidence" value="ECO:0007669"/>
    <property type="project" value="UniProtKB-UniRule"/>
</dbReference>
<dbReference type="CDD" id="cd01887">
    <property type="entry name" value="IF2_eIF5B"/>
    <property type="match status" value="1"/>
</dbReference>
<dbReference type="CDD" id="cd03702">
    <property type="entry name" value="IF2_mtIF2_II"/>
    <property type="match status" value="1"/>
</dbReference>
<dbReference type="CDD" id="cd03692">
    <property type="entry name" value="mtIF2_IVc"/>
    <property type="match status" value="1"/>
</dbReference>
<dbReference type="FunFam" id="2.40.30.10:FF:000007">
    <property type="entry name" value="Translation initiation factor IF-2"/>
    <property type="match status" value="1"/>
</dbReference>
<dbReference type="FunFam" id="2.40.30.10:FF:000008">
    <property type="entry name" value="Translation initiation factor IF-2"/>
    <property type="match status" value="1"/>
</dbReference>
<dbReference type="FunFam" id="3.40.50.10050:FF:000001">
    <property type="entry name" value="Translation initiation factor IF-2"/>
    <property type="match status" value="1"/>
</dbReference>
<dbReference type="FunFam" id="3.40.50.300:FF:000019">
    <property type="entry name" value="Translation initiation factor IF-2"/>
    <property type="match status" value="1"/>
</dbReference>
<dbReference type="Gene3D" id="3.40.50.300">
    <property type="entry name" value="P-loop containing nucleotide triphosphate hydrolases"/>
    <property type="match status" value="1"/>
</dbReference>
<dbReference type="Gene3D" id="3.30.56.50">
    <property type="entry name" value="Putative DNA-binding domain, N-terminal subdomain of bacterial translation initiation factor IF2"/>
    <property type="match status" value="1"/>
</dbReference>
<dbReference type="Gene3D" id="2.40.30.10">
    <property type="entry name" value="Translation factors"/>
    <property type="match status" value="2"/>
</dbReference>
<dbReference type="Gene3D" id="3.40.50.10050">
    <property type="entry name" value="Translation initiation factor IF- 2, domain 3"/>
    <property type="match status" value="1"/>
</dbReference>
<dbReference type="HAMAP" id="MF_00100_B">
    <property type="entry name" value="IF_2_B"/>
    <property type="match status" value="1"/>
</dbReference>
<dbReference type="InterPro" id="IPR009061">
    <property type="entry name" value="DNA-bd_dom_put_sf"/>
</dbReference>
<dbReference type="InterPro" id="IPR053905">
    <property type="entry name" value="EF-G-like_DII"/>
</dbReference>
<dbReference type="InterPro" id="IPR004161">
    <property type="entry name" value="EFTu-like_2"/>
</dbReference>
<dbReference type="InterPro" id="IPR013575">
    <property type="entry name" value="IF2_assoc_dom_bac"/>
</dbReference>
<dbReference type="InterPro" id="IPR044145">
    <property type="entry name" value="IF2_II"/>
</dbReference>
<dbReference type="InterPro" id="IPR006847">
    <property type="entry name" value="IF2_N"/>
</dbReference>
<dbReference type="InterPro" id="IPR027417">
    <property type="entry name" value="P-loop_NTPase"/>
</dbReference>
<dbReference type="InterPro" id="IPR005225">
    <property type="entry name" value="Small_GTP-bd"/>
</dbReference>
<dbReference type="InterPro" id="IPR000795">
    <property type="entry name" value="T_Tr_GTP-bd_dom"/>
</dbReference>
<dbReference type="InterPro" id="IPR000178">
    <property type="entry name" value="TF_IF2_bacterial-like"/>
</dbReference>
<dbReference type="InterPro" id="IPR015760">
    <property type="entry name" value="TIF_IF2"/>
</dbReference>
<dbReference type="InterPro" id="IPR023115">
    <property type="entry name" value="TIF_IF2_dom3"/>
</dbReference>
<dbReference type="InterPro" id="IPR036925">
    <property type="entry name" value="TIF_IF2_dom3_sf"/>
</dbReference>
<dbReference type="InterPro" id="IPR009000">
    <property type="entry name" value="Transl_B-barrel_sf"/>
</dbReference>
<dbReference type="NCBIfam" id="TIGR00487">
    <property type="entry name" value="IF-2"/>
    <property type="match status" value="1"/>
</dbReference>
<dbReference type="NCBIfam" id="TIGR00231">
    <property type="entry name" value="small_GTP"/>
    <property type="match status" value="1"/>
</dbReference>
<dbReference type="PANTHER" id="PTHR43381:SF5">
    <property type="entry name" value="TR-TYPE G DOMAIN-CONTAINING PROTEIN"/>
    <property type="match status" value="1"/>
</dbReference>
<dbReference type="PANTHER" id="PTHR43381">
    <property type="entry name" value="TRANSLATION INITIATION FACTOR IF-2-RELATED"/>
    <property type="match status" value="1"/>
</dbReference>
<dbReference type="Pfam" id="PF22042">
    <property type="entry name" value="EF-G_D2"/>
    <property type="match status" value="1"/>
</dbReference>
<dbReference type="Pfam" id="PF00009">
    <property type="entry name" value="GTP_EFTU"/>
    <property type="match status" value="1"/>
</dbReference>
<dbReference type="Pfam" id="PF03144">
    <property type="entry name" value="GTP_EFTU_D2"/>
    <property type="match status" value="1"/>
</dbReference>
<dbReference type="Pfam" id="PF11987">
    <property type="entry name" value="IF-2"/>
    <property type="match status" value="1"/>
</dbReference>
<dbReference type="Pfam" id="PF08364">
    <property type="entry name" value="IF2_assoc"/>
    <property type="match status" value="1"/>
</dbReference>
<dbReference type="Pfam" id="PF04760">
    <property type="entry name" value="IF2_N"/>
    <property type="match status" value="1"/>
</dbReference>
<dbReference type="SUPFAM" id="SSF52156">
    <property type="entry name" value="Initiation factor IF2/eIF5b, domain 3"/>
    <property type="match status" value="1"/>
</dbReference>
<dbReference type="SUPFAM" id="SSF52540">
    <property type="entry name" value="P-loop containing nucleoside triphosphate hydrolases"/>
    <property type="match status" value="1"/>
</dbReference>
<dbReference type="SUPFAM" id="SSF46955">
    <property type="entry name" value="Putative DNA-binding domain"/>
    <property type="match status" value="1"/>
</dbReference>
<dbReference type="SUPFAM" id="SSF50447">
    <property type="entry name" value="Translation proteins"/>
    <property type="match status" value="2"/>
</dbReference>
<dbReference type="PROSITE" id="PS51722">
    <property type="entry name" value="G_TR_2"/>
    <property type="match status" value="1"/>
</dbReference>
<dbReference type="PROSITE" id="PS01176">
    <property type="entry name" value="IF2"/>
    <property type="match status" value="1"/>
</dbReference>
<feature type="chain" id="PRO_0000137181" description="Translation initiation factor IF-2">
    <location>
        <begin position="1"/>
        <end position="867"/>
    </location>
</feature>
<feature type="domain" description="tr-type G">
    <location>
        <begin position="367"/>
        <end position="534"/>
    </location>
</feature>
<feature type="region of interest" description="G1" evidence="1">
    <location>
        <begin position="376"/>
        <end position="383"/>
    </location>
</feature>
<feature type="region of interest" description="G2" evidence="1">
    <location>
        <begin position="401"/>
        <end position="405"/>
    </location>
</feature>
<feature type="region of interest" description="G3" evidence="1">
    <location>
        <begin position="422"/>
        <end position="425"/>
    </location>
</feature>
<feature type="region of interest" description="G4" evidence="1">
    <location>
        <begin position="476"/>
        <end position="479"/>
    </location>
</feature>
<feature type="region of interest" description="G5" evidence="1">
    <location>
        <begin position="512"/>
        <end position="514"/>
    </location>
</feature>
<feature type="binding site" evidence="2">
    <location>
        <begin position="376"/>
        <end position="383"/>
    </location>
    <ligand>
        <name>GTP</name>
        <dbReference type="ChEBI" id="CHEBI:37565"/>
    </ligand>
</feature>
<feature type="binding site" evidence="2">
    <location>
        <begin position="422"/>
        <end position="426"/>
    </location>
    <ligand>
        <name>GTP</name>
        <dbReference type="ChEBI" id="CHEBI:37565"/>
    </ligand>
</feature>
<feature type="binding site" evidence="2">
    <location>
        <begin position="476"/>
        <end position="479"/>
    </location>
    <ligand>
        <name>GTP</name>
        <dbReference type="ChEBI" id="CHEBI:37565"/>
    </ligand>
</feature>
<keyword id="KW-0963">Cytoplasm</keyword>
<keyword id="KW-0342">GTP-binding</keyword>
<keyword id="KW-0396">Initiation factor</keyword>
<keyword id="KW-0547">Nucleotide-binding</keyword>
<keyword id="KW-0648">Protein biosynthesis</keyword>